<proteinExistence type="inferred from homology"/>
<sequence length="179" mass="18972">MNKPIDLKSAIRTISNYPKPGIEFRDITTLLGDARAFRRAVDELVQPWAGTKVDKIAGMEARGFILGGAVAHQLSAGFVPIRKKGKLPHTTVSIAYSLEYGLDEMEIHADAVVKGEKVILVDDLIATGGTATGAVGLLQKLGAEVIAACFVIDLPDLGGAKKIEALGVPVRSLISFEGH</sequence>
<comment type="function">
    <text evidence="1">Catalyzes a salvage reaction resulting in the formation of AMP, that is energically less costly than de novo synthesis.</text>
</comment>
<comment type="catalytic activity">
    <reaction evidence="1">
        <text>AMP + diphosphate = 5-phospho-alpha-D-ribose 1-diphosphate + adenine</text>
        <dbReference type="Rhea" id="RHEA:16609"/>
        <dbReference type="ChEBI" id="CHEBI:16708"/>
        <dbReference type="ChEBI" id="CHEBI:33019"/>
        <dbReference type="ChEBI" id="CHEBI:58017"/>
        <dbReference type="ChEBI" id="CHEBI:456215"/>
        <dbReference type="EC" id="2.4.2.7"/>
    </reaction>
</comment>
<comment type="pathway">
    <text evidence="1">Purine metabolism; AMP biosynthesis via salvage pathway; AMP from adenine: step 1/1.</text>
</comment>
<comment type="subunit">
    <text evidence="1">Homodimer.</text>
</comment>
<comment type="subcellular location">
    <subcellularLocation>
        <location evidence="1">Cytoplasm</location>
    </subcellularLocation>
</comment>
<comment type="similarity">
    <text evidence="1">Belongs to the purine/pyrimidine phosphoribosyltransferase family.</text>
</comment>
<accession>B2IBU5</accession>
<protein>
    <recommendedName>
        <fullName evidence="1">Adenine phosphoribosyltransferase</fullName>
        <shortName evidence="1">APRT</shortName>
        <ecNumber evidence="1">2.4.2.7</ecNumber>
    </recommendedName>
</protein>
<feature type="chain" id="PRO_1000116166" description="Adenine phosphoribosyltransferase">
    <location>
        <begin position="1"/>
        <end position="179"/>
    </location>
</feature>
<name>APT_BEII9</name>
<organism>
    <name type="scientific">Beijerinckia indica subsp. indica (strain ATCC 9039 / DSM 1715 / NCIMB 8712)</name>
    <dbReference type="NCBI Taxonomy" id="395963"/>
    <lineage>
        <taxon>Bacteria</taxon>
        <taxon>Pseudomonadati</taxon>
        <taxon>Pseudomonadota</taxon>
        <taxon>Alphaproteobacteria</taxon>
        <taxon>Hyphomicrobiales</taxon>
        <taxon>Beijerinckiaceae</taxon>
        <taxon>Beijerinckia</taxon>
    </lineage>
</organism>
<reference key="1">
    <citation type="journal article" date="2010" name="J. Bacteriol.">
        <title>Complete genome sequence of Beijerinckia indica subsp. indica.</title>
        <authorList>
            <person name="Tamas I."/>
            <person name="Dedysh S.N."/>
            <person name="Liesack W."/>
            <person name="Stott M.B."/>
            <person name="Alam M."/>
            <person name="Murrell J.C."/>
            <person name="Dunfield P.F."/>
        </authorList>
    </citation>
    <scope>NUCLEOTIDE SEQUENCE [LARGE SCALE GENOMIC DNA]</scope>
    <source>
        <strain>ATCC 9039 / DSM 1715 / NCIMB 8712</strain>
    </source>
</reference>
<keyword id="KW-0963">Cytoplasm</keyword>
<keyword id="KW-0328">Glycosyltransferase</keyword>
<keyword id="KW-0660">Purine salvage</keyword>
<keyword id="KW-1185">Reference proteome</keyword>
<keyword id="KW-0808">Transferase</keyword>
<evidence type="ECO:0000255" key="1">
    <source>
        <dbReference type="HAMAP-Rule" id="MF_00004"/>
    </source>
</evidence>
<gene>
    <name evidence="1" type="primary">apt</name>
    <name type="ordered locus">Bind_0159</name>
</gene>
<dbReference type="EC" id="2.4.2.7" evidence="1"/>
<dbReference type="EMBL" id="CP001016">
    <property type="protein sequence ID" value="ACB93817.1"/>
    <property type="molecule type" value="Genomic_DNA"/>
</dbReference>
<dbReference type="RefSeq" id="WP_012383175.1">
    <property type="nucleotide sequence ID" value="NC_010581.1"/>
</dbReference>
<dbReference type="SMR" id="B2IBU5"/>
<dbReference type="STRING" id="395963.Bind_0159"/>
<dbReference type="KEGG" id="bid:Bind_0159"/>
<dbReference type="eggNOG" id="COG0503">
    <property type="taxonomic scope" value="Bacteria"/>
</dbReference>
<dbReference type="HOGENOM" id="CLU_063339_3_0_5"/>
<dbReference type="OrthoDB" id="9803963at2"/>
<dbReference type="UniPathway" id="UPA00588">
    <property type="reaction ID" value="UER00646"/>
</dbReference>
<dbReference type="Proteomes" id="UP000001695">
    <property type="component" value="Chromosome"/>
</dbReference>
<dbReference type="GO" id="GO:0005737">
    <property type="term" value="C:cytoplasm"/>
    <property type="evidence" value="ECO:0007669"/>
    <property type="project" value="UniProtKB-SubCell"/>
</dbReference>
<dbReference type="GO" id="GO:0002055">
    <property type="term" value="F:adenine binding"/>
    <property type="evidence" value="ECO:0007669"/>
    <property type="project" value="TreeGrafter"/>
</dbReference>
<dbReference type="GO" id="GO:0003999">
    <property type="term" value="F:adenine phosphoribosyltransferase activity"/>
    <property type="evidence" value="ECO:0007669"/>
    <property type="project" value="UniProtKB-UniRule"/>
</dbReference>
<dbReference type="GO" id="GO:0016208">
    <property type="term" value="F:AMP binding"/>
    <property type="evidence" value="ECO:0007669"/>
    <property type="project" value="TreeGrafter"/>
</dbReference>
<dbReference type="GO" id="GO:0006168">
    <property type="term" value="P:adenine salvage"/>
    <property type="evidence" value="ECO:0007669"/>
    <property type="project" value="InterPro"/>
</dbReference>
<dbReference type="GO" id="GO:0044209">
    <property type="term" value="P:AMP salvage"/>
    <property type="evidence" value="ECO:0007669"/>
    <property type="project" value="UniProtKB-UniRule"/>
</dbReference>
<dbReference type="GO" id="GO:0006166">
    <property type="term" value="P:purine ribonucleoside salvage"/>
    <property type="evidence" value="ECO:0007669"/>
    <property type="project" value="UniProtKB-KW"/>
</dbReference>
<dbReference type="CDD" id="cd06223">
    <property type="entry name" value="PRTases_typeI"/>
    <property type="match status" value="1"/>
</dbReference>
<dbReference type="FunFam" id="3.40.50.2020:FF:000021">
    <property type="entry name" value="Adenine phosphoribosyltransferase"/>
    <property type="match status" value="1"/>
</dbReference>
<dbReference type="Gene3D" id="3.40.50.2020">
    <property type="match status" value="1"/>
</dbReference>
<dbReference type="HAMAP" id="MF_00004">
    <property type="entry name" value="Aden_phosphoribosyltr"/>
    <property type="match status" value="1"/>
</dbReference>
<dbReference type="InterPro" id="IPR005764">
    <property type="entry name" value="Ade_phspho_trans"/>
</dbReference>
<dbReference type="InterPro" id="IPR000836">
    <property type="entry name" value="PRibTrfase_dom"/>
</dbReference>
<dbReference type="InterPro" id="IPR029057">
    <property type="entry name" value="PRTase-like"/>
</dbReference>
<dbReference type="InterPro" id="IPR050054">
    <property type="entry name" value="UPRTase/APRTase"/>
</dbReference>
<dbReference type="NCBIfam" id="TIGR01090">
    <property type="entry name" value="apt"/>
    <property type="match status" value="1"/>
</dbReference>
<dbReference type="NCBIfam" id="NF002634">
    <property type="entry name" value="PRK02304.1-3"/>
    <property type="match status" value="1"/>
</dbReference>
<dbReference type="NCBIfam" id="NF002636">
    <property type="entry name" value="PRK02304.1-5"/>
    <property type="match status" value="1"/>
</dbReference>
<dbReference type="PANTHER" id="PTHR32315">
    <property type="entry name" value="ADENINE PHOSPHORIBOSYLTRANSFERASE"/>
    <property type="match status" value="1"/>
</dbReference>
<dbReference type="PANTHER" id="PTHR32315:SF3">
    <property type="entry name" value="ADENINE PHOSPHORIBOSYLTRANSFERASE"/>
    <property type="match status" value="1"/>
</dbReference>
<dbReference type="Pfam" id="PF00156">
    <property type="entry name" value="Pribosyltran"/>
    <property type="match status" value="1"/>
</dbReference>
<dbReference type="SUPFAM" id="SSF53271">
    <property type="entry name" value="PRTase-like"/>
    <property type="match status" value="1"/>
</dbReference>
<dbReference type="PROSITE" id="PS00103">
    <property type="entry name" value="PUR_PYR_PR_TRANSFER"/>
    <property type="match status" value="1"/>
</dbReference>